<evidence type="ECO:0000250" key="1"/>
<evidence type="ECO:0000250" key="2">
    <source>
        <dbReference type="UniProtKB" id="Q99KK2"/>
    </source>
</evidence>
<evidence type="ECO:0000256" key="3">
    <source>
        <dbReference type="SAM" id="MobiDB-lite"/>
    </source>
</evidence>
<evidence type="ECO:0000269" key="4">
    <source>
    </source>
</evidence>
<evidence type="ECO:0000269" key="5">
    <source ref="6"/>
</evidence>
<evidence type="ECO:0000303" key="6">
    <source>
    </source>
</evidence>
<evidence type="ECO:0000305" key="7"/>
<evidence type="ECO:0007744" key="8">
    <source>
    </source>
</evidence>
<name>NEUA_HUMAN</name>
<protein>
    <recommendedName>
        <fullName>N-acylneuraminate cytidylyltransferase</fullName>
        <ecNumber>2.7.7.43</ecNumber>
    </recommendedName>
    <alternativeName>
        <fullName>CMP-N-acetylneuraminic acid synthase</fullName>
        <shortName>CMP-NeuNAc synthase</shortName>
    </alternativeName>
</protein>
<accession>Q8NFW8</accession>
<accession>Q96AX5</accession>
<accession>Q9NQZ0</accession>
<comment type="function">
    <text>Catalyzes the activation of N-acetylneuraminic acid (NeuNAc) to cytidine 5'-monophosphate N-acetylneuraminic acid (CMP-NeuNAc), a substrate required for the addition of sialic acid. Has some activity toward NeuNAc, N-glycolylneuraminic acid (Neu5Gc) or 2-keto-3-deoxy-D-glycero-D-galacto-nononic acid (KDN).</text>
</comment>
<comment type="catalytic activity">
    <reaction evidence="4">
        <text>an N-acylneuraminate + CTP = a CMP-N-acyl-beta-neuraminate + diphosphate</text>
        <dbReference type="Rhea" id="RHEA:11344"/>
        <dbReference type="ChEBI" id="CHEBI:33019"/>
        <dbReference type="ChEBI" id="CHEBI:37563"/>
        <dbReference type="ChEBI" id="CHEBI:60073"/>
        <dbReference type="ChEBI" id="CHEBI:68671"/>
        <dbReference type="EC" id="2.7.7.43"/>
    </reaction>
</comment>
<comment type="pathway">
    <text>Amino-sugar metabolism; N-acetylneuraminate metabolism.</text>
</comment>
<comment type="subunit">
    <text>Homotetramer; the active enzyme is formed by a dimer of dimers.</text>
</comment>
<comment type="subcellular location">
    <subcellularLocation>
        <location evidence="4">Nucleus</location>
    </subcellularLocation>
</comment>
<comment type="alternative products">
    <event type="alternative splicing"/>
    <isoform>
        <id>Q8NFW8-1</id>
        <name>1</name>
        <sequence type="displayed"/>
    </isoform>
    <isoform>
        <id>Q8NFW8-2</id>
        <name>2</name>
        <sequence type="described" ref="VSP_012764"/>
    </isoform>
</comment>
<comment type="tissue specificity">
    <text evidence="4">Ubiquitously expressed. Expressed in pancreas, kidney, liver, skeletal muscle, lung, placenta, brain, heart, colon, PBL, small intestine, ovary, testis, prostate, thymus and spleen.</text>
</comment>
<comment type="domain">
    <text evidence="1">The BC2 (basic cluster 2) motif is necessary and sufficient for the nuclear localization and contains the catalytic active site. The localization in the nucleus is however not required for the enzyme activity (By similarity).</text>
</comment>
<comment type="similarity">
    <text evidence="7">Belongs to the CMP-NeuNAc synthase family.</text>
</comment>
<dbReference type="EC" id="2.7.7.43"/>
<dbReference type="EMBL" id="AF397212">
    <property type="protein sequence ID" value="AAM90580.1"/>
    <property type="molecule type" value="mRNA"/>
</dbReference>
<dbReference type="EMBL" id="AF271388">
    <property type="protein sequence ID" value="AAF76203.1"/>
    <property type="molecule type" value="mRNA"/>
</dbReference>
<dbReference type="EMBL" id="AK022927">
    <property type="protein sequence ID" value="BAB14311.1"/>
    <property type="molecule type" value="mRNA"/>
</dbReference>
<dbReference type="EMBL" id="AL832975">
    <property type="protein sequence ID" value="CAH56346.1"/>
    <property type="molecule type" value="mRNA"/>
</dbReference>
<dbReference type="EMBL" id="BC016609">
    <property type="protein sequence ID" value="AAH16609.1"/>
    <property type="molecule type" value="mRNA"/>
</dbReference>
<dbReference type="CCDS" id="CCDS8696.1">
    <molecule id="Q8NFW8-1"/>
</dbReference>
<dbReference type="RefSeq" id="NP_061156.1">
    <molecule id="Q8NFW8-1"/>
    <property type="nucleotide sequence ID" value="NM_018686.6"/>
</dbReference>
<dbReference type="SMR" id="Q8NFW8"/>
<dbReference type="BioGRID" id="120993">
    <property type="interactions" value="150"/>
</dbReference>
<dbReference type="FunCoup" id="Q8NFW8">
    <property type="interactions" value="1289"/>
</dbReference>
<dbReference type="IntAct" id="Q8NFW8">
    <property type="interactions" value="67"/>
</dbReference>
<dbReference type="MINT" id="Q8NFW8"/>
<dbReference type="STRING" id="9606.ENSP00000229329"/>
<dbReference type="DrugBank" id="DB02485">
    <property type="generic name" value="Cytidine-5'-Monophosphate-5-N-Acetylneuraminic Acid"/>
</dbReference>
<dbReference type="GlyGen" id="Q8NFW8">
    <property type="glycosylation" value="1 site, 1 O-linked glycan (1 site)"/>
</dbReference>
<dbReference type="iPTMnet" id="Q8NFW8"/>
<dbReference type="PhosphoSitePlus" id="Q8NFW8"/>
<dbReference type="SwissPalm" id="Q8NFW8"/>
<dbReference type="BioMuta" id="CMAS"/>
<dbReference type="DMDM" id="68059539"/>
<dbReference type="jPOST" id="Q8NFW8"/>
<dbReference type="MassIVE" id="Q8NFW8"/>
<dbReference type="PaxDb" id="9606-ENSP00000229329"/>
<dbReference type="PeptideAtlas" id="Q8NFW8"/>
<dbReference type="ProteomicsDB" id="73375">
    <molecule id="Q8NFW8-1"/>
</dbReference>
<dbReference type="ProteomicsDB" id="73376">
    <molecule id="Q8NFW8-2"/>
</dbReference>
<dbReference type="Pumba" id="Q8NFW8"/>
<dbReference type="Antibodypedia" id="24116">
    <property type="antibodies" value="111 antibodies from 25 providers"/>
</dbReference>
<dbReference type="DNASU" id="55907"/>
<dbReference type="Ensembl" id="ENST00000229329.7">
    <molecule id="Q8NFW8-1"/>
    <property type="protein sequence ID" value="ENSP00000229329.2"/>
    <property type="gene ID" value="ENSG00000111726.13"/>
</dbReference>
<dbReference type="Ensembl" id="ENST00000534981.5">
    <molecule id="Q8NFW8-2"/>
    <property type="protein sequence ID" value="ENSP00000446239.1"/>
    <property type="gene ID" value="ENSG00000111726.13"/>
</dbReference>
<dbReference type="GeneID" id="55907"/>
<dbReference type="KEGG" id="hsa:55907"/>
<dbReference type="MANE-Select" id="ENST00000229329.7">
    <property type="protein sequence ID" value="ENSP00000229329.2"/>
    <property type="RefSeq nucleotide sequence ID" value="NM_018686.6"/>
    <property type="RefSeq protein sequence ID" value="NP_061156.1"/>
</dbReference>
<dbReference type="UCSC" id="uc001rfm.5">
    <molecule id="Q8NFW8-1"/>
    <property type="organism name" value="human"/>
</dbReference>
<dbReference type="AGR" id="HGNC:18290"/>
<dbReference type="CTD" id="55907"/>
<dbReference type="DisGeNET" id="55907"/>
<dbReference type="GeneCards" id="CMAS"/>
<dbReference type="HGNC" id="HGNC:18290">
    <property type="gene designation" value="CMAS"/>
</dbReference>
<dbReference type="HPA" id="ENSG00000111726">
    <property type="expression patterns" value="Low tissue specificity"/>
</dbReference>
<dbReference type="MIM" id="603316">
    <property type="type" value="gene"/>
</dbReference>
<dbReference type="neXtProt" id="NX_Q8NFW8"/>
<dbReference type="OpenTargets" id="ENSG00000111726"/>
<dbReference type="PharmGKB" id="PA38519"/>
<dbReference type="VEuPathDB" id="HostDB:ENSG00000111726"/>
<dbReference type="eggNOG" id="ENOG502QQH3">
    <property type="taxonomic scope" value="Eukaryota"/>
</dbReference>
<dbReference type="GeneTree" id="ENSGT00390000004237"/>
<dbReference type="HOGENOM" id="CLU_042930_0_1_1"/>
<dbReference type="InParanoid" id="Q8NFW8"/>
<dbReference type="OMA" id="FHGFVWR"/>
<dbReference type="OrthoDB" id="10262032at2759"/>
<dbReference type="PAN-GO" id="Q8NFW8">
    <property type="GO annotations" value="1 GO annotation based on evolutionary models"/>
</dbReference>
<dbReference type="PhylomeDB" id="Q8NFW8"/>
<dbReference type="TreeFam" id="TF324840"/>
<dbReference type="BRENDA" id="2.7.7.43">
    <property type="organism ID" value="2681"/>
</dbReference>
<dbReference type="PathwayCommons" id="Q8NFW8"/>
<dbReference type="Reactome" id="R-HSA-4085001">
    <property type="pathway name" value="Sialic acid metabolism"/>
</dbReference>
<dbReference type="SignaLink" id="Q8NFW8"/>
<dbReference type="UniPathway" id="UPA00628"/>
<dbReference type="BioGRID-ORCS" id="55907">
    <property type="hits" value="41 hits in 1181 CRISPR screens"/>
</dbReference>
<dbReference type="ChiTaRS" id="CMAS">
    <property type="organism name" value="human"/>
</dbReference>
<dbReference type="GeneWiki" id="CMAS_(gene)"/>
<dbReference type="GenomeRNAi" id="55907"/>
<dbReference type="Pharos" id="Q8NFW8">
    <property type="development level" value="Tbio"/>
</dbReference>
<dbReference type="PRO" id="PR:Q8NFW8"/>
<dbReference type="Proteomes" id="UP000005640">
    <property type="component" value="Chromosome 12"/>
</dbReference>
<dbReference type="RNAct" id="Q8NFW8">
    <property type="molecule type" value="protein"/>
</dbReference>
<dbReference type="Bgee" id="ENSG00000111726">
    <property type="expression patterns" value="Expressed in adrenal tissue and 195 other cell types or tissues"/>
</dbReference>
<dbReference type="ExpressionAtlas" id="Q8NFW8">
    <property type="expression patterns" value="baseline and differential"/>
</dbReference>
<dbReference type="GO" id="GO:0016020">
    <property type="term" value="C:membrane"/>
    <property type="evidence" value="ECO:0007005"/>
    <property type="project" value="UniProtKB"/>
</dbReference>
<dbReference type="GO" id="GO:0005654">
    <property type="term" value="C:nucleoplasm"/>
    <property type="evidence" value="ECO:0000304"/>
    <property type="project" value="Reactome"/>
</dbReference>
<dbReference type="GO" id="GO:0005634">
    <property type="term" value="C:nucleus"/>
    <property type="evidence" value="ECO:0007005"/>
    <property type="project" value="UniProtKB"/>
</dbReference>
<dbReference type="GO" id="GO:0008781">
    <property type="term" value="F:N-acylneuraminate cytidylyltransferase activity"/>
    <property type="evidence" value="ECO:0000318"/>
    <property type="project" value="GO_Central"/>
</dbReference>
<dbReference type="GO" id="GO:0006055">
    <property type="term" value="P:CMP-N-acetylneuraminate biosynthetic process"/>
    <property type="evidence" value="ECO:0000315"/>
    <property type="project" value="FlyBase"/>
</dbReference>
<dbReference type="GO" id="GO:0070085">
    <property type="term" value="P:glycosylation"/>
    <property type="evidence" value="ECO:0000315"/>
    <property type="project" value="FlyBase"/>
</dbReference>
<dbReference type="GO" id="GO:0006054">
    <property type="term" value="P:N-acetylneuraminate metabolic process"/>
    <property type="evidence" value="ECO:0007669"/>
    <property type="project" value="UniProtKB-UniPathway"/>
</dbReference>
<dbReference type="CDD" id="cd02513">
    <property type="entry name" value="CMP-NeuAc_Synthase"/>
    <property type="match status" value="1"/>
</dbReference>
<dbReference type="CDD" id="cd01630">
    <property type="entry name" value="HAD_KDO-like"/>
    <property type="match status" value="1"/>
</dbReference>
<dbReference type="FunFam" id="3.40.50.1000:FF:000082">
    <property type="entry name" value="N-acylneuraminate cytidylyltransferase A"/>
    <property type="match status" value="1"/>
</dbReference>
<dbReference type="FunFam" id="3.90.550.10:FF:000074">
    <property type="entry name" value="N-acylneuraminate cytidylyltransferase A"/>
    <property type="match status" value="1"/>
</dbReference>
<dbReference type="Gene3D" id="3.40.50.1000">
    <property type="entry name" value="HAD superfamily/HAD-like"/>
    <property type="match status" value="1"/>
</dbReference>
<dbReference type="Gene3D" id="3.90.550.10">
    <property type="entry name" value="Spore Coat Polysaccharide Biosynthesis Protein SpsA, Chain A"/>
    <property type="match status" value="1"/>
</dbReference>
<dbReference type="InterPro" id="IPR050793">
    <property type="entry name" value="CMP-NeuNAc_synthase"/>
</dbReference>
<dbReference type="InterPro" id="IPR003329">
    <property type="entry name" value="Cytidylyl_trans"/>
</dbReference>
<dbReference type="InterPro" id="IPR036412">
    <property type="entry name" value="HAD-like_sf"/>
</dbReference>
<dbReference type="InterPro" id="IPR023214">
    <property type="entry name" value="HAD_sf"/>
</dbReference>
<dbReference type="InterPro" id="IPR029044">
    <property type="entry name" value="Nucleotide-diphossugar_trans"/>
</dbReference>
<dbReference type="PANTHER" id="PTHR21485">
    <property type="entry name" value="HAD SUPERFAMILY MEMBERS CMAS AND KDSC"/>
    <property type="match status" value="1"/>
</dbReference>
<dbReference type="PANTHER" id="PTHR21485:SF3">
    <property type="entry name" value="N-ACYLNEURAMINATE CYTIDYLYLTRANSFERASE"/>
    <property type="match status" value="1"/>
</dbReference>
<dbReference type="Pfam" id="PF02348">
    <property type="entry name" value="CTP_transf_3"/>
    <property type="match status" value="1"/>
</dbReference>
<dbReference type="SUPFAM" id="SSF56784">
    <property type="entry name" value="HAD-like"/>
    <property type="match status" value="1"/>
</dbReference>
<dbReference type="SUPFAM" id="SSF53448">
    <property type="entry name" value="Nucleotide-diphospho-sugar transferases"/>
    <property type="match status" value="1"/>
</dbReference>
<sequence length="434" mass="48379">MDSVEKGAATSVSNPRGRPSRGRPPKLQRNSRGGQGRGVEKPPHLAALILARGGSKGIPLKNIKHLAGVPLIGWVLRAALDSGAFQSVWVSTDHDEIENVAKQFGAQVHRRSSEVSKDSSTSLDAIIEFLNYHNEVDIVGNIQATSPCLHPTDLQKVAEMIREEGYDSVFSVVRRHQFRWSEIQKGVREVTEPLNLNPAKRPRRQDWDGELYENGSFYFAKRHLIEMGYLQGGKMAYYEMRAEHSVDIDVDIDWPIAEQRVLRYGYFGKEKLKEIKLLVCNIDGCLTNGHIYVSGDQKEIISYDVKDAIGISLLKKSGIEVRLISERACSKQTLSSLKLDCKMEVSVSDKLAVVDEWRKEMGLCWKEVAYLGNEVSDEECLKRVGLSGAPADACSTAQKAVGYICKCNGGRGAIREFAEHICLLMEKVNNSCQK</sequence>
<reference key="1">
    <citation type="journal article" date="2001" name="Glycoconj. J.">
        <title>Cloning and expression of human sialic acid pathway genes to generate CMP-sialic acids in insect cells.</title>
        <authorList>
            <person name="Lawrence S.M."/>
            <person name="Huddleston K.A."/>
            <person name="Tomiya N."/>
            <person name="Nguyen N."/>
            <person name="Lee Y.C."/>
            <person name="Vann W.F."/>
            <person name="Coleman T.A."/>
            <person name="Betenbaugh M.J."/>
        </authorList>
    </citation>
    <scope>NUCLEOTIDE SEQUENCE [MRNA] (ISOFORM 1)</scope>
    <scope>SUBCELLULAR LOCATION</scope>
    <scope>ENZYME ACTIVITY</scope>
    <scope>TISSUE SPECIFICITY</scope>
</reference>
<reference key="2">
    <citation type="submission" date="2000-05" db="EMBL/GenBank/DDBJ databases">
        <title>Human mRNA for CMP-N-acetylneuraminic acid synthase.</title>
        <authorList>
            <person name="Bouquin T."/>
            <person name="Mundy J."/>
        </authorList>
    </citation>
    <scope>NUCLEOTIDE SEQUENCE [MRNA] (ISOFORM 1)</scope>
</reference>
<reference key="3">
    <citation type="journal article" date="2004" name="Nat. Genet.">
        <title>Complete sequencing and characterization of 21,243 full-length human cDNAs.</title>
        <authorList>
            <person name="Ota T."/>
            <person name="Suzuki Y."/>
            <person name="Nishikawa T."/>
            <person name="Otsuki T."/>
            <person name="Sugiyama T."/>
            <person name="Irie R."/>
            <person name="Wakamatsu A."/>
            <person name="Hayashi K."/>
            <person name="Sato H."/>
            <person name="Nagai K."/>
            <person name="Kimura K."/>
            <person name="Makita H."/>
            <person name="Sekine M."/>
            <person name="Obayashi M."/>
            <person name="Nishi T."/>
            <person name="Shibahara T."/>
            <person name="Tanaka T."/>
            <person name="Ishii S."/>
            <person name="Yamamoto J."/>
            <person name="Saito K."/>
            <person name="Kawai Y."/>
            <person name="Isono Y."/>
            <person name="Nakamura Y."/>
            <person name="Nagahari K."/>
            <person name="Murakami K."/>
            <person name="Yasuda T."/>
            <person name="Iwayanagi T."/>
            <person name="Wagatsuma M."/>
            <person name="Shiratori A."/>
            <person name="Sudo H."/>
            <person name="Hosoiri T."/>
            <person name="Kaku Y."/>
            <person name="Kodaira H."/>
            <person name="Kondo H."/>
            <person name="Sugawara M."/>
            <person name="Takahashi M."/>
            <person name="Kanda K."/>
            <person name="Yokoi T."/>
            <person name="Furuya T."/>
            <person name="Kikkawa E."/>
            <person name="Omura Y."/>
            <person name="Abe K."/>
            <person name="Kamihara K."/>
            <person name="Katsuta N."/>
            <person name="Sato K."/>
            <person name="Tanikawa M."/>
            <person name="Yamazaki M."/>
            <person name="Ninomiya K."/>
            <person name="Ishibashi T."/>
            <person name="Yamashita H."/>
            <person name="Murakawa K."/>
            <person name="Fujimori K."/>
            <person name="Tanai H."/>
            <person name="Kimata M."/>
            <person name="Watanabe M."/>
            <person name="Hiraoka S."/>
            <person name="Chiba Y."/>
            <person name="Ishida S."/>
            <person name="Ono Y."/>
            <person name="Takiguchi S."/>
            <person name="Watanabe S."/>
            <person name="Yosida M."/>
            <person name="Hotuta T."/>
            <person name="Kusano J."/>
            <person name="Kanehori K."/>
            <person name="Takahashi-Fujii A."/>
            <person name="Hara H."/>
            <person name="Tanase T.-O."/>
            <person name="Nomura Y."/>
            <person name="Togiya S."/>
            <person name="Komai F."/>
            <person name="Hara R."/>
            <person name="Takeuchi K."/>
            <person name="Arita M."/>
            <person name="Imose N."/>
            <person name="Musashino K."/>
            <person name="Yuuki H."/>
            <person name="Oshima A."/>
            <person name="Sasaki N."/>
            <person name="Aotsuka S."/>
            <person name="Yoshikawa Y."/>
            <person name="Matsunawa H."/>
            <person name="Ichihara T."/>
            <person name="Shiohata N."/>
            <person name="Sano S."/>
            <person name="Moriya S."/>
            <person name="Momiyama H."/>
            <person name="Satoh N."/>
            <person name="Takami S."/>
            <person name="Terashima Y."/>
            <person name="Suzuki O."/>
            <person name="Nakagawa S."/>
            <person name="Senoh A."/>
            <person name="Mizoguchi H."/>
            <person name="Goto Y."/>
            <person name="Shimizu F."/>
            <person name="Wakebe H."/>
            <person name="Hishigaki H."/>
            <person name="Watanabe T."/>
            <person name="Sugiyama A."/>
            <person name="Takemoto M."/>
            <person name="Kawakami B."/>
            <person name="Yamazaki M."/>
            <person name="Watanabe K."/>
            <person name="Kumagai A."/>
            <person name="Itakura S."/>
            <person name="Fukuzumi Y."/>
            <person name="Fujimori Y."/>
            <person name="Komiyama M."/>
            <person name="Tashiro H."/>
            <person name="Tanigami A."/>
            <person name="Fujiwara T."/>
            <person name="Ono T."/>
            <person name="Yamada K."/>
            <person name="Fujii Y."/>
            <person name="Ozaki K."/>
            <person name="Hirao M."/>
            <person name="Ohmori Y."/>
            <person name="Kawabata A."/>
            <person name="Hikiji T."/>
            <person name="Kobatake N."/>
            <person name="Inagaki H."/>
            <person name="Ikema Y."/>
            <person name="Okamoto S."/>
            <person name="Okitani R."/>
            <person name="Kawakami T."/>
            <person name="Noguchi S."/>
            <person name="Itoh T."/>
            <person name="Shigeta K."/>
            <person name="Senba T."/>
            <person name="Matsumura K."/>
            <person name="Nakajima Y."/>
            <person name="Mizuno T."/>
            <person name="Morinaga M."/>
            <person name="Sasaki M."/>
            <person name="Togashi T."/>
            <person name="Oyama M."/>
            <person name="Hata H."/>
            <person name="Watanabe M."/>
            <person name="Komatsu T."/>
            <person name="Mizushima-Sugano J."/>
            <person name="Satoh T."/>
            <person name="Shirai Y."/>
            <person name="Takahashi Y."/>
            <person name="Nakagawa K."/>
            <person name="Okumura K."/>
            <person name="Nagase T."/>
            <person name="Nomura N."/>
            <person name="Kikuchi H."/>
            <person name="Masuho Y."/>
            <person name="Yamashita R."/>
            <person name="Nakai K."/>
            <person name="Yada T."/>
            <person name="Nakamura Y."/>
            <person name="Ohara O."/>
            <person name="Isogai T."/>
            <person name="Sugano S."/>
        </authorList>
    </citation>
    <scope>NUCLEOTIDE SEQUENCE [LARGE SCALE MRNA] (ISOFORM 1)</scope>
</reference>
<reference key="4">
    <citation type="journal article" date="2007" name="BMC Genomics">
        <title>The full-ORF clone resource of the German cDNA consortium.</title>
        <authorList>
            <person name="Bechtel S."/>
            <person name="Rosenfelder H."/>
            <person name="Duda A."/>
            <person name="Schmidt C.P."/>
            <person name="Ernst U."/>
            <person name="Wellenreuther R."/>
            <person name="Mehrle A."/>
            <person name="Schuster C."/>
            <person name="Bahr A."/>
            <person name="Bloecker H."/>
            <person name="Heubner D."/>
            <person name="Hoerlein A."/>
            <person name="Michel G."/>
            <person name="Wedler H."/>
            <person name="Koehrer K."/>
            <person name="Ottenwaelder B."/>
            <person name="Poustka A."/>
            <person name="Wiemann S."/>
            <person name="Schupp I."/>
        </authorList>
    </citation>
    <scope>NUCLEOTIDE SEQUENCE [LARGE SCALE MRNA] (ISOFORM 1)</scope>
    <source>
        <tissue>Stomach</tissue>
    </source>
</reference>
<reference key="5">
    <citation type="journal article" date="2004" name="Genome Res.">
        <title>The status, quality, and expansion of the NIH full-length cDNA project: the Mammalian Gene Collection (MGC).</title>
        <authorList>
            <consortium name="The MGC Project Team"/>
        </authorList>
    </citation>
    <scope>NUCLEOTIDE SEQUENCE [LARGE SCALE MRNA] (ISOFORM 2)</scope>
    <source>
        <tissue>Placenta</tissue>
    </source>
</reference>
<reference key="6">
    <citation type="submission" date="2009-08" db="UniProtKB">
        <authorList>
            <person name="Bienvenut W.V."/>
            <person name="Lourenco F."/>
            <person name="Olson M.F."/>
        </authorList>
    </citation>
    <scope>PROTEIN SEQUENCE OF 1-16; 38-52; 189-200; 307-316 AND 384-399</scope>
    <scope>ACETYLATION AT MET-1</scope>
    <scope>IDENTIFICATION BY MASS SPECTROMETRY</scope>
    <source>
        <tissue>Mammary carcinoma</tissue>
    </source>
</reference>
<reference key="7">
    <citation type="journal article" date="2011" name="BMC Syst. Biol.">
        <title>Initial characterization of the human central proteome.</title>
        <authorList>
            <person name="Burkard T.R."/>
            <person name="Planyavsky M."/>
            <person name="Kaupe I."/>
            <person name="Breitwieser F.P."/>
            <person name="Buerckstuemmer T."/>
            <person name="Bennett K.L."/>
            <person name="Superti-Furga G."/>
            <person name="Colinge J."/>
        </authorList>
    </citation>
    <scope>IDENTIFICATION BY MASS SPECTROMETRY [LARGE SCALE ANALYSIS]</scope>
</reference>
<reference key="8">
    <citation type="journal article" date="2012" name="Proc. Natl. Acad. Sci. U.S.A.">
        <title>N-terminal acetylome analyses and functional insights of the N-terminal acetyltransferase NatB.</title>
        <authorList>
            <person name="Van Damme P."/>
            <person name="Lasa M."/>
            <person name="Polevoda B."/>
            <person name="Gazquez C."/>
            <person name="Elosegui-Artola A."/>
            <person name="Kim D.S."/>
            <person name="De Juan-Pardo E."/>
            <person name="Demeyer K."/>
            <person name="Hole K."/>
            <person name="Larrea E."/>
            <person name="Timmerman E."/>
            <person name="Prieto J."/>
            <person name="Arnesen T."/>
            <person name="Sherman F."/>
            <person name="Gevaert K."/>
            <person name="Aldabe R."/>
        </authorList>
    </citation>
    <scope>ACETYLATION [LARGE SCALE ANALYSIS] AT MET-1</scope>
    <scope>IDENTIFICATION BY MASS SPECTROMETRY [LARGE SCALE ANALYSIS]</scope>
</reference>
<reference key="9">
    <citation type="journal article" date="2014" name="J. Proteomics">
        <title>An enzyme assisted RP-RPLC approach for in-depth analysis of human liver phosphoproteome.</title>
        <authorList>
            <person name="Bian Y."/>
            <person name="Song C."/>
            <person name="Cheng K."/>
            <person name="Dong M."/>
            <person name="Wang F."/>
            <person name="Huang J."/>
            <person name="Sun D."/>
            <person name="Wang L."/>
            <person name="Ye M."/>
            <person name="Zou H."/>
        </authorList>
    </citation>
    <scope>IDENTIFICATION BY MASS SPECTROMETRY [LARGE SCALE ANALYSIS]</scope>
    <source>
        <tissue>Liver</tissue>
    </source>
</reference>
<keyword id="KW-0007">Acetylation</keyword>
<keyword id="KW-0025">Alternative splicing</keyword>
<keyword id="KW-0903">Direct protein sequencing</keyword>
<keyword id="KW-0488">Methylation</keyword>
<keyword id="KW-0548">Nucleotidyltransferase</keyword>
<keyword id="KW-0539">Nucleus</keyword>
<keyword id="KW-1267">Proteomics identification</keyword>
<keyword id="KW-1185">Reference proteome</keyword>
<keyword id="KW-0808">Transferase</keyword>
<feature type="chain" id="PRO_0000213199" description="N-acylneuraminate cytidylyltransferase">
    <location>
        <begin position="1"/>
        <end position="434"/>
    </location>
</feature>
<feature type="region of interest" description="Disordered" evidence="3">
    <location>
        <begin position="1"/>
        <end position="42"/>
    </location>
</feature>
<feature type="short sequence motif" description="BC1 motif">
    <location>
        <begin position="15"/>
        <end position="31"/>
    </location>
</feature>
<feature type="short sequence motif" description="BC2 motif">
    <location>
        <begin position="200"/>
        <end position="206"/>
    </location>
</feature>
<feature type="short sequence motif" description="BC3 motif">
    <location>
        <begin position="269"/>
        <end position="276"/>
    </location>
</feature>
<feature type="active site" evidence="1">
    <location>
        <position position="201"/>
    </location>
</feature>
<feature type="binding site" evidence="1">
    <location>
        <position position="52"/>
    </location>
    <ligand>
        <name>substrate</name>
    </ligand>
</feature>
<feature type="binding site" evidence="1">
    <location>
        <position position="62"/>
    </location>
    <ligand>
        <name>substrate</name>
    </ligand>
</feature>
<feature type="binding site" evidence="1">
    <location>
        <position position="111"/>
    </location>
    <ligand>
        <name>substrate</name>
    </ligand>
</feature>
<feature type="binding site" evidence="1">
    <location>
        <position position="120"/>
    </location>
    <ligand>
        <name>substrate</name>
    </ligand>
</feature>
<feature type="binding site" evidence="1">
    <location>
        <position position="122"/>
    </location>
    <ligand>
        <name>substrate</name>
    </ligand>
</feature>
<feature type="binding site" evidence="1">
    <location>
        <position position="143"/>
    </location>
    <ligand>
        <name>substrate</name>
    </ligand>
</feature>
<feature type="modified residue" description="N-acetylmethionine" evidence="5 8">
    <location>
        <position position="1"/>
    </location>
</feature>
<feature type="modified residue" description="Omega-N-methylarginine" evidence="2">
    <location>
        <position position="37"/>
    </location>
</feature>
<feature type="modified residue" description="Omega-N-methylarginine" evidence="2">
    <location>
        <position position="52"/>
    </location>
</feature>
<feature type="splice variant" id="VSP_012764" description="In isoform 2." evidence="6">
    <location>
        <begin position="264"/>
        <end position="434"/>
    </location>
</feature>
<feature type="sequence conflict" description="In Ref. 1; AAM90580." evidence="7" ref="1">
    <original>T</original>
    <variation>Y</variation>
    <location>
        <position position="396"/>
    </location>
</feature>
<organism>
    <name type="scientific">Homo sapiens</name>
    <name type="common">Human</name>
    <dbReference type="NCBI Taxonomy" id="9606"/>
    <lineage>
        <taxon>Eukaryota</taxon>
        <taxon>Metazoa</taxon>
        <taxon>Chordata</taxon>
        <taxon>Craniata</taxon>
        <taxon>Vertebrata</taxon>
        <taxon>Euteleostomi</taxon>
        <taxon>Mammalia</taxon>
        <taxon>Eutheria</taxon>
        <taxon>Euarchontoglires</taxon>
        <taxon>Primates</taxon>
        <taxon>Haplorrhini</taxon>
        <taxon>Catarrhini</taxon>
        <taxon>Hominidae</taxon>
        <taxon>Homo</taxon>
    </lineage>
</organism>
<gene>
    <name type="primary">CMAS</name>
</gene>
<proteinExistence type="evidence at protein level"/>